<sequence>MASQGTKRSYEQMETDGERQNATEIRASVGKMIDGIGRFYIQMCTELKLSDYEGRLIQNSLTIERMVLSAFDERRNKYLEEHPSAGKDPKKTGGPIYKRVDGKWMRELVLYDKEEIRRIWRQANNGDDATAGLTHMMIWHSNLNDTTYQRTRALVRTGMDPRMCSLMQGSTLPRRSGAAGAAVKGVGTMVLELIRIIKRGINDRNFWRGENGRKTRIAYERMCNILKGKFQTAAQRAMMDQVRESRNPGNAEIEDLIFLARSALILRGSVAHKSCLPACVYGPAVASGYAFEKEGYSLVGIDPFKLLQTSQVYSLIRPNENPAHKSQLVWMACNSAAFEDLRVSSFIRGTKVIPRGKLSTRGVQIASNENMDTMGSSTLELRSRYWAIRTRSGGNTNQQRASAGQISIQPTFSVQRNLPFDKTTIMAAFTGNAEGRTSDMRAEIIRMMESARPEEVSFQGRGVFELSDERAANPIVPSFDMSNEGSYFFGDNAEEYDN</sequence>
<proteinExistence type="inferred from homology"/>
<keyword id="KW-0167">Capsid protein</keyword>
<keyword id="KW-1139">Helical capsid protein</keyword>
<keyword id="KW-1048">Host nucleus</keyword>
<keyword id="KW-0945">Host-virus interaction</keyword>
<keyword id="KW-0687">Ribonucleoprotein</keyword>
<keyword id="KW-0694">RNA-binding</keyword>
<keyword id="KW-0543">Viral nucleoprotein</keyword>
<keyword id="KW-1163">Viral penetration into host nucleus</keyword>
<keyword id="KW-0946">Virion</keyword>
<keyword id="KW-1160">Virus entry into host cell</keyword>
<reference key="1">
    <citation type="journal article" date="1989" name="J. Gen. Virol.">
        <title>Biological and genetic evolution of the nucleoprotein gene of human influenza A viruses.</title>
        <authorList>
            <person name="Altmueller A."/>
            <person name="Fitch W.M."/>
            <person name="Scholtissek C."/>
        </authorList>
    </citation>
    <scope>NUCLEOTIDE SEQUENCE [GENOMIC RNA]</scope>
</reference>
<reference key="2">
    <citation type="submission" date="2007-03" db="EMBL/GenBank/DDBJ databases">
        <title>The NIAID influenza genome sequencing project.</title>
        <authorList>
            <person name="Ghedin E."/>
            <person name="Spiro D."/>
            <person name="Miller N."/>
            <person name="Zaborsky J."/>
            <person name="Feldblyum T."/>
            <person name="Subbu V."/>
            <person name="Shumway M."/>
            <person name="Sparenborg J."/>
            <person name="Groveman L."/>
            <person name="Halpin R."/>
            <person name="Sitz J."/>
            <person name="Koo H."/>
            <person name="Salzberg S.L."/>
            <person name="Webster R.G."/>
            <person name="Hoffmann E."/>
            <person name="Krauss S."/>
            <person name="Naeve C."/>
            <person name="Bao Y."/>
            <person name="Bolotov P."/>
            <person name="Dernovoy D."/>
            <person name="Kiryutin B."/>
            <person name="Lipman D.J."/>
            <person name="Tatusova T."/>
        </authorList>
    </citation>
    <scope>NUCLEOTIDE SEQUENCE [GENOMIC RNA]</scope>
</reference>
<reference key="3">
    <citation type="submission" date="2007-03" db="EMBL/GenBank/DDBJ databases">
        <authorList>
            <consortium name="The NIAID Influenza Genome Sequencing Consortium"/>
        </authorList>
    </citation>
    <scope>NUCLEOTIDE SEQUENCE [GENOMIC RNA]</scope>
</reference>
<organismHost>
    <name type="scientific">Aves</name>
    <dbReference type="NCBI Taxonomy" id="8782"/>
</organismHost>
<organismHost>
    <name type="scientific">Homo sapiens</name>
    <name type="common">Human</name>
    <dbReference type="NCBI Taxonomy" id="9606"/>
</organismHost>
<organismHost>
    <name type="scientific">Sus scrofa</name>
    <name type="common">Pig</name>
    <dbReference type="NCBI Taxonomy" id="9823"/>
</organismHost>
<dbReference type="EMBL" id="D00599">
    <property type="protein sequence ID" value="BAA00475.1"/>
    <property type="molecule type" value="Genomic_RNA"/>
</dbReference>
<dbReference type="EMBL" id="CY020296">
    <property type="protein sequence ID" value="ABO38069.1"/>
    <property type="molecule type" value="Viral_cRNA"/>
</dbReference>
<dbReference type="PIR" id="E36754">
    <property type="entry name" value="VHIVX4"/>
</dbReference>
<dbReference type="SMR" id="P18069"/>
<dbReference type="PRO" id="PR:P18069"/>
<dbReference type="Proteomes" id="UP000008025">
    <property type="component" value="Genome"/>
</dbReference>
<dbReference type="GO" id="GO:0019029">
    <property type="term" value="C:helical viral capsid"/>
    <property type="evidence" value="ECO:0007669"/>
    <property type="project" value="UniProtKB-UniRule"/>
</dbReference>
<dbReference type="GO" id="GO:0043657">
    <property type="term" value="C:host cell"/>
    <property type="evidence" value="ECO:0007669"/>
    <property type="project" value="GOC"/>
</dbReference>
<dbReference type="GO" id="GO:0042025">
    <property type="term" value="C:host cell nucleus"/>
    <property type="evidence" value="ECO:0007669"/>
    <property type="project" value="UniProtKB-SubCell"/>
</dbReference>
<dbReference type="GO" id="GO:1990904">
    <property type="term" value="C:ribonucleoprotein complex"/>
    <property type="evidence" value="ECO:0007669"/>
    <property type="project" value="UniProtKB-KW"/>
</dbReference>
<dbReference type="GO" id="GO:0019013">
    <property type="term" value="C:viral nucleocapsid"/>
    <property type="evidence" value="ECO:0007669"/>
    <property type="project" value="UniProtKB-UniRule"/>
</dbReference>
<dbReference type="GO" id="GO:0003723">
    <property type="term" value="F:RNA binding"/>
    <property type="evidence" value="ECO:0007669"/>
    <property type="project" value="UniProtKB-UniRule"/>
</dbReference>
<dbReference type="GO" id="GO:0005198">
    <property type="term" value="F:structural molecule activity"/>
    <property type="evidence" value="ECO:0007669"/>
    <property type="project" value="UniProtKB-UniRule"/>
</dbReference>
<dbReference type="GO" id="GO:0046718">
    <property type="term" value="P:symbiont entry into host cell"/>
    <property type="evidence" value="ECO:0007669"/>
    <property type="project" value="UniProtKB-KW"/>
</dbReference>
<dbReference type="GO" id="GO:0075732">
    <property type="term" value="P:viral penetration into host nucleus"/>
    <property type="evidence" value="ECO:0007669"/>
    <property type="project" value="UniProtKB-UniRule"/>
</dbReference>
<dbReference type="HAMAP" id="MF_04070">
    <property type="entry name" value="INFV_NCAP"/>
    <property type="match status" value="1"/>
</dbReference>
<dbReference type="InterPro" id="IPR002141">
    <property type="entry name" value="Flu_NP"/>
</dbReference>
<dbReference type="Pfam" id="PF00506">
    <property type="entry name" value="Flu_NP"/>
    <property type="match status" value="1"/>
</dbReference>
<dbReference type="SUPFAM" id="SSF161003">
    <property type="entry name" value="flu NP-like"/>
    <property type="match status" value="1"/>
</dbReference>
<feature type="chain" id="PRO_0000079026" description="Nucleoprotein">
    <location>
        <begin position="1"/>
        <end position="498"/>
    </location>
</feature>
<feature type="region of interest" description="Disordered" evidence="2">
    <location>
        <begin position="1"/>
        <end position="21"/>
    </location>
</feature>
<feature type="short sequence motif" description="Unconventional nuclear localization signal" evidence="1">
    <location>
        <begin position="1"/>
        <end position="18"/>
    </location>
</feature>
<feature type="short sequence motif" description="Bipartite nuclear localization signal" evidence="1">
    <location>
        <begin position="198"/>
        <end position="216"/>
    </location>
</feature>
<feature type="compositionally biased region" description="Basic and acidic residues" evidence="2">
    <location>
        <begin position="8"/>
        <end position="21"/>
    </location>
</feature>
<feature type="sequence variant">
    <original>I</original>
    <variation>M</variation>
    <location>
        <position position="196"/>
    </location>
</feature>
<feature type="sequence variant">
    <original>R</original>
    <variation>K</variation>
    <location>
        <position position="446"/>
    </location>
</feature>
<gene>
    <name evidence="1" type="primary">NP</name>
</gene>
<comment type="function">
    <text evidence="1">Encapsidates the negative strand viral RNA, protecting it from nucleases. The encapsidated genomic RNA is termed the ribonucleoprotein (RNP) and serves as template for transcription and replication. The RNP needs to be localized in the host nucleus to start an infectious cycle, but is too large to diffuse through the nuclear pore complex. NP comprises at least 2 nuclear localization signals that are responsible for the active RNP import into the nucleus through cellular importin alpha/beta pathway. Later in the infection, nclear export of RNPs are mediated through viral proteins NEP interacting with M1 which binds nucleoproteins. It is possible that nucleoprotein binds directly host exportin-1/XPO1 and plays an active role in RNPs nuclear export. M1 interaction with RNP seems to hide nucleoprotein's nuclear localization signals. Soon after a virion infects a new cell, M1 dissociates from the RNP under acidification of the virion driven by M2 protein. Dissociation of M1 from RNP unmasks nucleoprotein's nuclear localization signals, targeting the RNP to the nucleus.</text>
</comment>
<comment type="subunit">
    <text evidence="1">Homomultimerizes to form the nucleocapsid. May bind host exportin-1/XPO1. Binds to viral genomic RNA. Protein-RNA contacts are mediated by a combination of electrostatic interactions between positively charged residues and the phosphate backbone and planar interactions between aromatic side chains and bases.</text>
</comment>
<comment type="subcellular location">
    <subcellularLocation>
        <location evidence="1">Virion</location>
    </subcellularLocation>
    <subcellularLocation>
        <location evidence="1">Host nucleus</location>
    </subcellularLocation>
</comment>
<comment type="PTM">
    <text evidence="1">Late in virus-infected cells, may be cleaved from a 56-kDa protein to a 53-kDa protein by a cellular caspase. This cleavage might be a marker for the onset of apoptosis in infected cells or have a specific function in virus host interaction.</text>
</comment>
<comment type="similarity">
    <text evidence="1">Belongs to the influenza viruses nucleoprotein family.</text>
</comment>
<protein>
    <recommendedName>
        <fullName evidence="1">Nucleoprotein</fullName>
    </recommendedName>
    <alternativeName>
        <fullName evidence="1">Nucleocapsid protein</fullName>
        <shortName evidence="1">Protein N</shortName>
    </alternativeName>
</protein>
<accession>P18069</accession>
<accession>A4GBY1</accession>
<name>NCAP_I77AA</name>
<evidence type="ECO:0000255" key="1">
    <source>
        <dbReference type="HAMAP-Rule" id="MF_04070"/>
    </source>
</evidence>
<evidence type="ECO:0000256" key="2">
    <source>
        <dbReference type="SAM" id="MobiDB-lite"/>
    </source>
</evidence>
<organism>
    <name type="scientific">Influenza A virus (strain A/Brazil/11/1978 H1N1)</name>
    <dbReference type="NCBI Taxonomy" id="393560"/>
    <lineage>
        <taxon>Viruses</taxon>
        <taxon>Riboviria</taxon>
        <taxon>Orthornavirae</taxon>
        <taxon>Negarnaviricota</taxon>
        <taxon>Polyploviricotina</taxon>
        <taxon>Insthoviricetes</taxon>
        <taxon>Articulavirales</taxon>
        <taxon>Orthomyxoviridae</taxon>
        <taxon>Alphainfluenzavirus</taxon>
        <taxon>Alphainfluenzavirus influenzae</taxon>
        <taxon>Influenza A virus</taxon>
    </lineage>
</organism>